<sequence>METFNSLFMVSPLLLGVLFFVAMLAGFIDSIAGGGGLLTIPALMAAGMSPANALATNKLQACGGSISATIYFIRRKVVSLSDQKLNIAMTFVGSMSGALLVQYVQADVLRQILPILVICIGLYFLLMPKLGEEDRQRRMYGLPFALIAGGCVGFYDGFFGPAAGSFYALAFVTLCGFNLAKATAHAKLLNATSNIGGLLLFILGGKVIWATGFVMLVGQFLGARMGSRLVLSKGQKLIRPMIVIVSAVMSAKLLYDSHGQEILHWLGMN</sequence>
<feature type="chain" id="PRO_0000169189" description="Probable membrane transporter protein YfcA">
    <location>
        <begin position="1"/>
        <end position="269"/>
    </location>
</feature>
<feature type="topological domain" description="Periplasmic" evidence="2">
    <location>
        <begin position="1"/>
        <end position="7"/>
    </location>
</feature>
<feature type="transmembrane region" description="Helical" evidence="2">
    <location>
        <begin position="8"/>
        <end position="28"/>
    </location>
</feature>
<feature type="topological domain" description="Cytoplasmic" evidence="2">
    <location>
        <begin position="29"/>
        <end position="30"/>
    </location>
</feature>
<feature type="transmembrane region" description="Helical" evidence="2">
    <location>
        <begin position="31"/>
        <end position="51"/>
    </location>
</feature>
<feature type="topological domain" description="Periplasmic" evidence="2">
    <location>
        <begin position="52"/>
        <end position="84"/>
    </location>
</feature>
<feature type="transmembrane region" description="Helical" evidence="2">
    <location>
        <begin position="85"/>
        <end position="105"/>
    </location>
</feature>
<feature type="topological domain" description="Cytoplasmic" evidence="2">
    <location>
        <begin position="106"/>
        <end position="111"/>
    </location>
</feature>
<feature type="transmembrane region" description="Helical" evidence="2">
    <location>
        <begin position="112"/>
        <end position="132"/>
    </location>
</feature>
<feature type="topological domain" description="Periplasmic" evidence="2">
    <location>
        <begin position="133"/>
        <end position="156"/>
    </location>
</feature>
<feature type="transmembrane region" description="Helical" evidence="2">
    <location>
        <begin position="157"/>
        <end position="177"/>
    </location>
</feature>
<feature type="topological domain" description="Cytoplasmic" evidence="2">
    <location>
        <begin position="178"/>
        <end position="197"/>
    </location>
</feature>
<feature type="transmembrane region" description="Helical" evidence="2">
    <location>
        <begin position="198"/>
        <end position="218"/>
    </location>
</feature>
<feature type="topological domain" description="Periplasmic" evidence="2">
    <location>
        <begin position="219"/>
        <end position="269"/>
    </location>
</feature>
<name>YFCA_ECOL6</name>
<keyword id="KW-0997">Cell inner membrane</keyword>
<keyword id="KW-1003">Cell membrane</keyword>
<keyword id="KW-0472">Membrane</keyword>
<keyword id="KW-1185">Reference proteome</keyword>
<keyword id="KW-0812">Transmembrane</keyword>
<keyword id="KW-1133">Transmembrane helix</keyword>
<keyword id="KW-0813">Transport</keyword>
<comment type="subcellular location">
    <subcellularLocation>
        <location evidence="1">Cell inner membrane</location>
        <topology evidence="1">Multi-pass membrane protein</topology>
    </subcellularLocation>
</comment>
<comment type="similarity">
    <text evidence="3">Belongs to the 4-toluene sulfonate uptake permease (TSUP) (TC 2.A.102) family.</text>
</comment>
<protein>
    <recommendedName>
        <fullName>Probable membrane transporter protein YfcA</fullName>
    </recommendedName>
</protein>
<reference key="1">
    <citation type="journal article" date="2002" name="Proc. Natl. Acad. Sci. U.S.A.">
        <title>Extensive mosaic structure revealed by the complete genome sequence of uropathogenic Escherichia coli.</title>
        <authorList>
            <person name="Welch R.A."/>
            <person name="Burland V."/>
            <person name="Plunkett G. III"/>
            <person name="Redford P."/>
            <person name="Roesch P."/>
            <person name="Rasko D."/>
            <person name="Buckles E.L."/>
            <person name="Liou S.-R."/>
            <person name="Boutin A."/>
            <person name="Hackett J."/>
            <person name="Stroud D."/>
            <person name="Mayhew G.F."/>
            <person name="Rose D.J."/>
            <person name="Zhou S."/>
            <person name="Schwartz D.C."/>
            <person name="Perna N.T."/>
            <person name="Mobley H.L.T."/>
            <person name="Donnenberg M.S."/>
            <person name="Blattner F.R."/>
        </authorList>
    </citation>
    <scope>NUCLEOTIDE SEQUENCE [LARGE SCALE GENOMIC DNA]</scope>
    <source>
        <strain>CFT073 / ATCC 700928 / UPEC</strain>
    </source>
</reference>
<evidence type="ECO:0000250" key="1"/>
<evidence type="ECO:0000255" key="2"/>
<evidence type="ECO:0000305" key="3"/>
<accession>P0AD31</accession>
<accession>P14008</accession>
<proteinExistence type="inferred from homology"/>
<dbReference type="EMBL" id="AE014075">
    <property type="protein sequence ID" value="AAN81323.1"/>
    <property type="molecule type" value="Genomic_DNA"/>
</dbReference>
<dbReference type="RefSeq" id="WP_000447361.1">
    <property type="nucleotide sequence ID" value="NZ_CP051263.1"/>
</dbReference>
<dbReference type="STRING" id="199310.c2873"/>
<dbReference type="KEGG" id="ecc:c2873"/>
<dbReference type="eggNOG" id="COG0730">
    <property type="taxonomic scope" value="Bacteria"/>
</dbReference>
<dbReference type="HOGENOM" id="CLU_045498_2_1_6"/>
<dbReference type="BioCyc" id="ECOL199310:C2873-MONOMER"/>
<dbReference type="Proteomes" id="UP000001410">
    <property type="component" value="Chromosome"/>
</dbReference>
<dbReference type="GO" id="GO:0005886">
    <property type="term" value="C:plasma membrane"/>
    <property type="evidence" value="ECO:0007669"/>
    <property type="project" value="UniProtKB-SubCell"/>
</dbReference>
<dbReference type="InterPro" id="IPR002781">
    <property type="entry name" value="TM_pro_TauE-like"/>
</dbReference>
<dbReference type="InterPro" id="IPR052017">
    <property type="entry name" value="TSUP"/>
</dbReference>
<dbReference type="NCBIfam" id="NF007909">
    <property type="entry name" value="PRK10621.1"/>
    <property type="match status" value="1"/>
</dbReference>
<dbReference type="PANTHER" id="PTHR30269:SF0">
    <property type="entry name" value="MEMBRANE TRANSPORTER PROTEIN YFCA-RELATED"/>
    <property type="match status" value="1"/>
</dbReference>
<dbReference type="PANTHER" id="PTHR30269">
    <property type="entry name" value="TRANSMEMBRANE PROTEIN YFCA"/>
    <property type="match status" value="1"/>
</dbReference>
<dbReference type="Pfam" id="PF01925">
    <property type="entry name" value="TauE"/>
    <property type="match status" value="1"/>
</dbReference>
<gene>
    <name type="primary">yfcA</name>
    <name type="ordered locus">c2873</name>
</gene>
<organism>
    <name type="scientific">Escherichia coli O6:H1 (strain CFT073 / ATCC 700928 / UPEC)</name>
    <dbReference type="NCBI Taxonomy" id="199310"/>
    <lineage>
        <taxon>Bacteria</taxon>
        <taxon>Pseudomonadati</taxon>
        <taxon>Pseudomonadota</taxon>
        <taxon>Gammaproteobacteria</taxon>
        <taxon>Enterobacterales</taxon>
        <taxon>Enterobacteriaceae</taxon>
        <taxon>Escherichia</taxon>
    </lineage>
</organism>